<feature type="chain" id="PRO_0000259524" description="Histone-lysine N-methyltransferase trr">
    <location>
        <begin position="1"/>
        <end position="2431"/>
    </location>
</feature>
<feature type="domain" description="FYR N-terminal" evidence="3">
    <location>
        <begin position="2061"/>
        <end position="2121"/>
    </location>
</feature>
<feature type="domain" description="FYR C-terminal" evidence="4">
    <location>
        <begin position="2122"/>
        <end position="2209"/>
    </location>
</feature>
<feature type="domain" description="SET" evidence="2">
    <location>
        <begin position="2291"/>
        <end position="2407"/>
    </location>
</feature>
<feature type="domain" description="Post-SET" evidence="1">
    <location>
        <begin position="2415"/>
        <end position="2431"/>
    </location>
</feature>
<feature type="zinc finger region" description="C2HC pre-PHD-type" evidence="5">
    <location>
        <begin position="1895"/>
        <end position="1935"/>
    </location>
</feature>
<feature type="zinc finger region" description="PHD-type" evidence="5">
    <location>
        <begin position="1956"/>
        <end position="2003"/>
    </location>
</feature>
<feature type="region of interest" description="Disordered" evidence="6">
    <location>
        <begin position="34"/>
        <end position="78"/>
    </location>
</feature>
<feature type="region of interest" description="Disordered" evidence="6">
    <location>
        <begin position="135"/>
        <end position="201"/>
    </location>
</feature>
<feature type="region of interest" description="Disordered" evidence="6">
    <location>
        <begin position="213"/>
        <end position="235"/>
    </location>
</feature>
<feature type="region of interest" description="Disordered" evidence="6">
    <location>
        <begin position="759"/>
        <end position="789"/>
    </location>
</feature>
<feature type="region of interest" description="Disordered" evidence="6">
    <location>
        <begin position="863"/>
        <end position="895"/>
    </location>
</feature>
<feature type="region of interest" description="Disordered" evidence="6">
    <location>
        <begin position="918"/>
        <end position="973"/>
    </location>
</feature>
<feature type="region of interest" description="Disordered" evidence="6">
    <location>
        <begin position="1226"/>
        <end position="1292"/>
    </location>
</feature>
<feature type="region of interest" description="Disordered" evidence="6">
    <location>
        <begin position="1404"/>
        <end position="1433"/>
    </location>
</feature>
<feature type="region of interest" description="Disordered" evidence="6">
    <location>
        <begin position="1478"/>
        <end position="1500"/>
    </location>
</feature>
<feature type="region of interest" description="Disordered" evidence="6">
    <location>
        <begin position="1790"/>
        <end position="1836"/>
    </location>
</feature>
<feature type="short sequence motif" description="LXXLL motif 1">
    <location>
        <begin position="801"/>
        <end position="805"/>
    </location>
</feature>
<feature type="short sequence motif" description="LXXLL motif 2">
    <location>
        <begin position="1652"/>
        <end position="1656"/>
    </location>
</feature>
<feature type="short sequence motif" description="LXXLL motif 3">
    <location>
        <begin position="2060"/>
        <end position="2064"/>
    </location>
</feature>
<feature type="compositionally biased region" description="Polar residues" evidence="6">
    <location>
        <begin position="142"/>
        <end position="165"/>
    </location>
</feature>
<feature type="compositionally biased region" description="Low complexity" evidence="6">
    <location>
        <begin position="171"/>
        <end position="183"/>
    </location>
</feature>
<feature type="compositionally biased region" description="Low complexity" evidence="6">
    <location>
        <begin position="218"/>
        <end position="235"/>
    </location>
</feature>
<feature type="compositionally biased region" description="Low complexity" evidence="6">
    <location>
        <begin position="767"/>
        <end position="787"/>
    </location>
</feature>
<feature type="compositionally biased region" description="Low complexity" evidence="6">
    <location>
        <begin position="866"/>
        <end position="895"/>
    </location>
</feature>
<feature type="compositionally biased region" description="Low complexity" evidence="6">
    <location>
        <begin position="952"/>
        <end position="970"/>
    </location>
</feature>
<feature type="compositionally biased region" description="Low complexity" evidence="6">
    <location>
        <begin position="1226"/>
        <end position="1241"/>
    </location>
</feature>
<feature type="compositionally biased region" description="Basic residues" evidence="6">
    <location>
        <begin position="1269"/>
        <end position="1281"/>
    </location>
</feature>
<feature type="compositionally biased region" description="Low complexity" evidence="6">
    <location>
        <begin position="1410"/>
        <end position="1422"/>
    </location>
</feature>
<feature type="compositionally biased region" description="Gly residues" evidence="6">
    <location>
        <begin position="1423"/>
        <end position="1433"/>
    </location>
</feature>
<feature type="compositionally biased region" description="Polar residues" evidence="6">
    <location>
        <begin position="1794"/>
        <end position="1811"/>
    </location>
</feature>
<feature type="modified residue" description="Phosphothreonine" evidence="9">
    <location>
        <position position="1486"/>
    </location>
</feature>
<feature type="modified residue" description="Phosphoserine" evidence="9">
    <location>
        <position position="1488"/>
    </location>
</feature>
<feature type="modified residue" description="Phosphoserine" evidence="9">
    <location>
        <position position="1490"/>
    </location>
</feature>
<feature type="splice variant" id="VSP_021439" description="In isoform 2." evidence="13">
    <original>SEYRISTPRNSQSNPLLHRNTA</original>
    <variation>T</variation>
    <location>
        <begin position="140"/>
        <end position="161"/>
    </location>
</feature>
<feature type="sequence conflict" description="In Ref. 3; CAA15944." evidence="13" ref="3">
    <original>S</original>
    <variation>A</variation>
    <location>
        <position position="219"/>
    </location>
</feature>
<reference key="1">
    <citation type="journal article" date="2000" name="Science">
        <title>The genome sequence of Drosophila melanogaster.</title>
        <authorList>
            <person name="Adams M.D."/>
            <person name="Celniker S.E."/>
            <person name="Holt R.A."/>
            <person name="Evans C.A."/>
            <person name="Gocayne J.D."/>
            <person name="Amanatides P.G."/>
            <person name="Scherer S.E."/>
            <person name="Li P.W."/>
            <person name="Hoskins R.A."/>
            <person name="Galle R.F."/>
            <person name="George R.A."/>
            <person name="Lewis S.E."/>
            <person name="Richards S."/>
            <person name="Ashburner M."/>
            <person name="Henderson S.N."/>
            <person name="Sutton G.G."/>
            <person name="Wortman J.R."/>
            <person name="Yandell M.D."/>
            <person name="Zhang Q."/>
            <person name="Chen L.X."/>
            <person name="Brandon R.C."/>
            <person name="Rogers Y.-H.C."/>
            <person name="Blazej R.G."/>
            <person name="Champe M."/>
            <person name="Pfeiffer B.D."/>
            <person name="Wan K.H."/>
            <person name="Doyle C."/>
            <person name="Baxter E.G."/>
            <person name="Helt G."/>
            <person name="Nelson C.R."/>
            <person name="Miklos G.L.G."/>
            <person name="Abril J.F."/>
            <person name="Agbayani A."/>
            <person name="An H.-J."/>
            <person name="Andrews-Pfannkoch C."/>
            <person name="Baldwin D."/>
            <person name="Ballew R.M."/>
            <person name="Basu A."/>
            <person name="Baxendale J."/>
            <person name="Bayraktaroglu L."/>
            <person name="Beasley E.M."/>
            <person name="Beeson K.Y."/>
            <person name="Benos P.V."/>
            <person name="Berman B.P."/>
            <person name="Bhandari D."/>
            <person name="Bolshakov S."/>
            <person name="Borkova D."/>
            <person name="Botchan M.R."/>
            <person name="Bouck J."/>
            <person name="Brokstein P."/>
            <person name="Brottier P."/>
            <person name="Burtis K.C."/>
            <person name="Busam D.A."/>
            <person name="Butler H."/>
            <person name="Cadieu E."/>
            <person name="Center A."/>
            <person name="Chandra I."/>
            <person name="Cherry J.M."/>
            <person name="Cawley S."/>
            <person name="Dahlke C."/>
            <person name="Davenport L.B."/>
            <person name="Davies P."/>
            <person name="de Pablos B."/>
            <person name="Delcher A."/>
            <person name="Deng Z."/>
            <person name="Mays A.D."/>
            <person name="Dew I."/>
            <person name="Dietz S.M."/>
            <person name="Dodson K."/>
            <person name="Doup L.E."/>
            <person name="Downes M."/>
            <person name="Dugan-Rocha S."/>
            <person name="Dunkov B.C."/>
            <person name="Dunn P."/>
            <person name="Durbin K.J."/>
            <person name="Evangelista C.C."/>
            <person name="Ferraz C."/>
            <person name="Ferriera S."/>
            <person name="Fleischmann W."/>
            <person name="Fosler C."/>
            <person name="Gabrielian A.E."/>
            <person name="Garg N.S."/>
            <person name="Gelbart W.M."/>
            <person name="Glasser K."/>
            <person name="Glodek A."/>
            <person name="Gong F."/>
            <person name="Gorrell J.H."/>
            <person name="Gu Z."/>
            <person name="Guan P."/>
            <person name="Harris M."/>
            <person name="Harris N.L."/>
            <person name="Harvey D.A."/>
            <person name="Heiman T.J."/>
            <person name="Hernandez J.R."/>
            <person name="Houck J."/>
            <person name="Hostin D."/>
            <person name="Houston K.A."/>
            <person name="Howland T.J."/>
            <person name="Wei M.-H."/>
            <person name="Ibegwam C."/>
            <person name="Jalali M."/>
            <person name="Kalush F."/>
            <person name="Karpen G.H."/>
            <person name="Ke Z."/>
            <person name="Kennison J.A."/>
            <person name="Ketchum K.A."/>
            <person name="Kimmel B.E."/>
            <person name="Kodira C.D."/>
            <person name="Kraft C.L."/>
            <person name="Kravitz S."/>
            <person name="Kulp D."/>
            <person name="Lai Z."/>
            <person name="Lasko P."/>
            <person name="Lei Y."/>
            <person name="Levitsky A.A."/>
            <person name="Li J.H."/>
            <person name="Li Z."/>
            <person name="Liang Y."/>
            <person name="Lin X."/>
            <person name="Liu X."/>
            <person name="Mattei B."/>
            <person name="McIntosh T.C."/>
            <person name="McLeod M.P."/>
            <person name="McPherson D."/>
            <person name="Merkulov G."/>
            <person name="Milshina N.V."/>
            <person name="Mobarry C."/>
            <person name="Morris J."/>
            <person name="Moshrefi A."/>
            <person name="Mount S.M."/>
            <person name="Moy M."/>
            <person name="Murphy B."/>
            <person name="Murphy L."/>
            <person name="Muzny D.M."/>
            <person name="Nelson D.L."/>
            <person name="Nelson D.R."/>
            <person name="Nelson K.A."/>
            <person name="Nixon K."/>
            <person name="Nusskern D.R."/>
            <person name="Pacleb J.M."/>
            <person name="Palazzolo M."/>
            <person name="Pittman G.S."/>
            <person name="Pan S."/>
            <person name="Pollard J."/>
            <person name="Puri V."/>
            <person name="Reese M.G."/>
            <person name="Reinert K."/>
            <person name="Remington K."/>
            <person name="Saunders R.D.C."/>
            <person name="Scheeler F."/>
            <person name="Shen H."/>
            <person name="Shue B.C."/>
            <person name="Siden-Kiamos I."/>
            <person name="Simpson M."/>
            <person name="Skupski M.P."/>
            <person name="Smith T.J."/>
            <person name="Spier E."/>
            <person name="Spradling A.C."/>
            <person name="Stapleton M."/>
            <person name="Strong R."/>
            <person name="Sun E."/>
            <person name="Svirskas R."/>
            <person name="Tector C."/>
            <person name="Turner R."/>
            <person name="Venter E."/>
            <person name="Wang A.H."/>
            <person name="Wang X."/>
            <person name="Wang Z.-Y."/>
            <person name="Wassarman D.A."/>
            <person name="Weinstock G.M."/>
            <person name="Weissenbach J."/>
            <person name="Williams S.M."/>
            <person name="Woodage T."/>
            <person name="Worley K.C."/>
            <person name="Wu D."/>
            <person name="Yang S."/>
            <person name="Yao Q.A."/>
            <person name="Ye J."/>
            <person name="Yeh R.-F."/>
            <person name="Zaveri J.S."/>
            <person name="Zhan M."/>
            <person name="Zhang G."/>
            <person name="Zhao Q."/>
            <person name="Zheng L."/>
            <person name="Zheng X.H."/>
            <person name="Zhong F.N."/>
            <person name="Zhong W."/>
            <person name="Zhou X."/>
            <person name="Zhu S.C."/>
            <person name="Zhu X."/>
            <person name="Smith H.O."/>
            <person name="Gibbs R.A."/>
            <person name="Myers E.W."/>
            <person name="Rubin G.M."/>
            <person name="Venter J.C."/>
        </authorList>
    </citation>
    <scope>NUCLEOTIDE SEQUENCE [LARGE SCALE GENOMIC DNA]</scope>
    <source>
        <strain>Berkeley</strain>
    </source>
</reference>
<reference key="2">
    <citation type="journal article" date="2002" name="Genome Biol.">
        <title>Annotation of the Drosophila melanogaster euchromatic genome: a systematic review.</title>
        <authorList>
            <person name="Misra S."/>
            <person name="Crosby M.A."/>
            <person name="Mungall C.J."/>
            <person name="Matthews B.B."/>
            <person name="Campbell K.S."/>
            <person name="Hradecky P."/>
            <person name="Huang Y."/>
            <person name="Kaminker J.S."/>
            <person name="Millburn G.H."/>
            <person name="Prochnik S.E."/>
            <person name="Smith C.D."/>
            <person name="Tupy J.L."/>
            <person name="Whitfield E.J."/>
            <person name="Bayraktaroglu L."/>
            <person name="Berman B.P."/>
            <person name="Bettencourt B.R."/>
            <person name="Celniker S.E."/>
            <person name="de Grey A.D.N.J."/>
            <person name="Drysdale R.A."/>
            <person name="Harris N.L."/>
            <person name="Richter J."/>
            <person name="Russo S."/>
            <person name="Schroeder A.J."/>
            <person name="Shu S.Q."/>
            <person name="Stapleton M."/>
            <person name="Yamada C."/>
            <person name="Ashburner M."/>
            <person name="Gelbart W.M."/>
            <person name="Rubin G.M."/>
            <person name="Lewis S.E."/>
        </authorList>
    </citation>
    <scope>GENOME REANNOTATION</scope>
    <scope>ALTERNATIVE SPLICING</scope>
    <source>
        <strain>Berkeley</strain>
    </source>
</reference>
<reference key="3">
    <citation type="journal article" date="2000" name="Science">
        <title>From sequence to chromosome: the tip of the X chromosome of D. melanogaster.</title>
        <authorList>
            <person name="Benos P.V."/>
            <person name="Gatt M.K."/>
            <person name="Ashburner M."/>
            <person name="Murphy L."/>
            <person name="Harris D."/>
            <person name="Barrell B.G."/>
            <person name="Ferraz C."/>
            <person name="Vidal S."/>
            <person name="Brun C."/>
            <person name="Demailles J."/>
            <person name="Cadieu E."/>
            <person name="Dreano S."/>
            <person name="Gloux S."/>
            <person name="Lelaure V."/>
            <person name="Mottier S."/>
            <person name="Galibert F."/>
            <person name="Borkova D."/>
            <person name="Minana B."/>
            <person name="Kafatos F.C."/>
            <person name="Louis C."/>
            <person name="Siden-Kiamos I."/>
            <person name="Bolshakov S."/>
            <person name="Papagiannakis G."/>
            <person name="Spanos L."/>
            <person name="Cox S."/>
            <person name="Madueno E."/>
            <person name="de Pablos B."/>
            <person name="Modolell J."/>
            <person name="Peter A."/>
            <person name="Schoettler P."/>
            <person name="Werner M."/>
            <person name="Mourkioti F."/>
            <person name="Beinert N."/>
            <person name="Dowe G."/>
            <person name="Schaefer U."/>
            <person name="Jaeckle H."/>
            <person name="Bucheton A."/>
            <person name="Callister D.M."/>
            <person name="Campbell L.A."/>
            <person name="Darlamitsou A."/>
            <person name="Henderson N.S."/>
            <person name="McMillan P.J."/>
            <person name="Salles C."/>
            <person name="Tait E.A."/>
            <person name="Valenti P."/>
            <person name="Saunders R.D.C."/>
            <person name="Glover D.M."/>
        </authorList>
    </citation>
    <scope>NUCLEOTIDE SEQUENCE [LARGE SCALE GENOMIC DNA]</scope>
    <source>
        <strain>Oregon-R</strain>
    </source>
</reference>
<reference key="4">
    <citation type="journal article" date="2002" name="Genome Biol.">
        <title>A Drosophila full-length cDNA resource.</title>
        <authorList>
            <person name="Stapleton M."/>
            <person name="Carlson J.W."/>
            <person name="Brokstein P."/>
            <person name="Yu C."/>
            <person name="Champe M."/>
            <person name="George R.A."/>
            <person name="Guarin H."/>
            <person name="Kronmiller B."/>
            <person name="Pacleb J.M."/>
            <person name="Park S."/>
            <person name="Wan K.H."/>
            <person name="Rubin G.M."/>
            <person name="Celniker S.E."/>
        </authorList>
    </citation>
    <scope>NUCLEOTIDE SEQUENCE [LARGE SCALE MRNA] OF 1409-2431</scope>
    <source>
        <strain>Berkeley</strain>
        <tissue>Embryo</tissue>
        <tissue>Ovary</tissue>
    </source>
</reference>
<reference key="5">
    <citation type="journal article" date="1999" name="Mech. Dev.">
        <title>Molecular genetic analysis of the Drosophila trithorax-related gene which encodes a novel SET domain protein.</title>
        <authorList>
            <person name="Sedkov Y."/>
            <person name="Benes J.J."/>
            <person name="Berger J.R."/>
            <person name="Riker K.M."/>
            <person name="Tillib S."/>
            <person name="Jones R.S."/>
            <person name="Mazo A."/>
        </authorList>
    </citation>
    <scope>TISSUE SPECIFICITY</scope>
    <scope>DEVELOPMENTAL STAGE</scope>
</reference>
<reference key="6">
    <citation type="journal article" date="2003" name="Nature">
        <title>Methylation at lysine 4 of histone H3 in ecdysone-dependent development of Drosophila.</title>
        <authorList>
            <person name="Sedkov Y."/>
            <person name="Cho E."/>
            <person name="Petruk S."/>
            <person name="Cherbas L."/>
            <person name="Smith S.T."/>
            <person name="Jones R.S."/>
            <person name="Cherbas P."/>
            <person name="Canaani E."/>
            <person name="Jaynes J.B."/>
            <person name="Mazo A."/>
        </authorList>
    </citation>
    <scope>FUNCTION</scope>
    <scope>CATALYTIC ACTIVITY</scope>
    <scope>SUBCELLULAR LOCATION</scope>
    <scope>INTERACTION WITH ECR</scope>
</reference>
<reference key="7">
    <citation type="journal article" date="2008" name="J. Proteome Res.">
        <title>Phosphoproteome analysis of Drosophila melanogaster embryos.</title>
        <authorList>
            <person name="Zhai B."/>
            <person name="Villen J."/>
            <person name="Beausoleil S.A."/>
            <person name="Mintseris J."/>
            <person name="Gygi S.P."/>
        </authorList>
    </citation>
    <scope>PHOSPHORYLATION [LARGE SCALE ANALYSIS] AT THR-1486; SER-1488 AND SER-1490</scope>
    <scope>IDENTIFICATION BY MASS SPECTROMETRY</scope>
    <source>
        <tissue>Embryo</tissue>
    </source>
</reference>
<reference key="8">
    <citation type="journal article" date="2011" name="Mol. Cell. Biol.">
        <title>The COMPASS family of H3K4 methylases in Drosophila.</title>
        <authorList>
            <person name="Mohan M."/>
            <person name="Herz H.M."/>
            <person name="Smith E.R."/>
            <person name="Zhang Y."/>
            <person name="Jackson J."/>
            <person name="Washburn M.P."/>
            <person name="Florens L."/>
            <person name="Eissenberg J.C."/>
            <person name="Shilatifard A."/>
        </authorList>
    </citation>
    <scope>IDENTIFICATION IN THE MLL3/4 COMPLEX</scope>
</reference>
<reference key="9">
    <citation type="journal article" date="2012" name="Am. J. Hum. Genet.">
        <title>Disruption of an EHMT1-associated chromatin-modification module causes intellectual disability.</title>
        <authorList>
            <person name="Kleefstra T."/>
            <person name="Kramer J.M."/>
            <person name="Neveling K."/>
            <person name="Willemsen M.H."/>
            <person name="Koemans T.S."/>
            <person name="Vissers L.E."/>
            <person name="Wissink-Lindhout W."/>
            <person name="Fenckova M."/>
            <person name="van den Akker W.M."/>
            <person name="Kasri N.N."/>
            <person name="Nillesen W.M."/>
            <person name="Prescott T."/>
            <person name="Clark R.D."/>
            <person name="Devriendt K."/>
            <person name="van Reeuwijk J."/>
            <person name="de Brouwer A.P."/>
            <person name="Gilissen C."/>
            <person name="Zhou H."/>
            <person name="Brunner H.G."/>
            <person name="Veltman J.A."/>
            <person name="Schenck A."/>
            <person name="van Bokhoven H."/>
        </authorList>
    </citation>
    <scope>FUNCTION</scope>
    <scope>DISRUPTION PHENOTYPE</scope>
</reference>
<reference key="10">
    <citation type="journal article" date="2013" name="Mol. Biol. Cell">
        <title>Ash2 acts as an ecdysone receptor coactivator by stabilizing the histone methyltransferase Trr.</title>
        <authorList>
            <person name="Carbonell A."/>
            <person name="Mazo A."/>
            <person name="Serras F."/>
            <person name="Corominas M."/>
        </authorList>
    </citation>
    <scope>FUNCTION</scope>
    <scope>INTERACTION WITH ASH2</scope>
    <scope>DISRUPTION PHENOTYPE</scope>
</reference>
<organism>
    <name type="scientific">Drosophila melanogaster</name>
    <name type="common">Fruit fly</name>
    <dbReference type="NCBI Taxonomy" id="7227"/>
    <lineage>
        <taxon>Eukaryota</taxon>
        <taxon>Metazoa</taxon>
        <taxon>Ecdysozoa</taxon>
        <taxon>Arthropoda</taxon>
        <taxon>Hexapoda</taxon>
        <taxon>Insecta</taxon>
        <taxon>Pterygota</taxon>
        <taxon>Neoptera</taxon>
        <taxon>Endopterygota</taxon>
        <taxon>Diptera</taxon>
        <taxon>Brachycera</taxon>
        <taxon>Muscomorpha</taxon>
        <taxon>Ephydroidea</taxon>
        <taxon>Drosophilidae</taxon>
        <taxon>Drosophila</taxon>
        <taxon>Sophophora</taxon>
    </lineage>
</organism>
<dbReference type="EC" id="2.1.1.354" evidence="8"/>
<dbReference type="EMBL" id="AE014298">
    <property type="protein sequence ID" value="AAF45684.2"/>
    <property type="molecule type" value="Genomic_DNA"/>
</dbReference>
<dbReference type="EMBL" id="AE014298">
    <property type="protein sequence ID" value="AAN09063.2"/>
    <property type="molecule type" value="Genomic_DNA"/>
</dbReference>
<dbReference type="EMBL" id="AL021106">
    <property type="protein sequence ID" value="CAA15944.1"/>
    <property type="status" value="ALT_SEQ"/>
    <property type="molecule type" value="Genomic_DNA"/>
</dbReference>
<dbReference type="EMBL" id="AY069273">
    <property type="protein sequence ID" value="AAL39418.1"/>
    <property type="status" value="ALT_INIT"/>
    <property type="molecule type" value="mRNA"/>
</dbReference>
<dbReference type="EMBL" id="AY113651">
    <property type="protein sequence ID" value="AAM29656.1"/>
    <property type="status" value="ALT_INIT"/>
    <property type="molecule type" value="mRNA"/>
</dbReference>
<dbReference type="PIR" id="T12687">
    <property type="entry name" value="T12687"/>
</dbReference>
<dbReference type="RefSeq" id="NP_525040.2">
    <molecule id="Q8IRW8-2"/>
    <property type="nucleotide sequence ID" value="NM_080301.3"/>
</dbReference>
<dbReference type="RefSeq" id="NP_726773.2">
    <molecule id="Q8IRW8-1"/>
    <property type="nucleotide sequence ID" value="NM_166911.4"/>
</dbReference>
<dbReference type="SMR" id="Q8IRW8"/>
<dbReference type="BioGRID" id="57695">
    <property type="interactions" value="31"/>
</dbReference>
<dbReference type="ComplexPortal" id="CPX-2284">
    <property type="entry name" value="Histone-lysine N-methyltransferase/demethylase TRR complex"/>
</dbReference>
<dbReference type="ELM" id="Q8IRW8"/>
<dbReference type="FunCoup" id="Q8IRW8">
    <property type="interactions" value="294"/>
</dbReference>
<dbReference type="IntAct" id="Q8IRW8">
    <property type="interactions" value="11"/>
</dbReference>
<dbReference type="STRING" id="7227.FBpp0070347"/>
<dbReference type="GlyGen" id="Q8IRW8">
    <property type="glycosylation" value="1 site, 1 O-linked glycan (1 site)"/>
</dbReference>
<dbReference type="iPTMnet" id="Q8IRW8"/>
<dbReference type="PaxDb" id="7227-FBpp0070347"/>
<dbReference type="EnsemblMetazoa" id="FBtr0070362">
    <molecule id="Q8IRW8-2"/>
    <property type="protein sequence ID" value="FBpp0070346"/>
    <property type="gene ID" value="FBgn0023518"/>
</dbReference>
<dbReference type="EnsemblMetazoa" id="FBtr0070363">
    <molecule id="Q8IRW8-1"/>
    <property type="protein sequence ID" value="FBpp0070347"/>
    <property type="gene ID" value="FBgn0023518"/>
</dbReference>
<dbReference type="GeneID" id="31149"/>
<dbReference type="KEGG" id="dme:Dmel_CG3848"/>
<dbReference type="UCSC" id="CG3848-RC">
    <molecule id="Q8IRW8-1"/>
    <property type="organism name" value="d. melanogaster"/>
</dbReference>
<dbReference type="AGR" id="FB:FBgn0023518"/>
<dbReference type="CTD" id="31149"/>
<dbReference type="FlyBase" id="FBgn0023518">
    <property type="gene designation" value="trr"/>
</dbReference>
<dbReference type="VEuPathDB" id="VectorBase:FBgn0023518"/>
<dbReference type="eggNOG" id="KOG4443">
    <property type="taxonomic scope" value="Eukaryota"/>
</dbReference>
<dbReference type="GeneTree" id="ENSGT00940000168851"/>
<dbReference type="InParanoid" id="Q8IRW8"/>
<dbReference type="OMA" id="RDIVICT"/>
<dbReference type="OrthoDB" id="308383at2759"/>
<dbReference type="PhylomeDB" id="Q8IRW8"/>
<dbReference type="Reactome" id="R-DME-201722">
    <property type="pathway name" value="Formation of the beta-catenin:TCF transactivating complex"/>
</dbReference>
<dbReference type="Reactome" id="R-DME-8936459">
    <property type="pathway name" value="RUNX1 regulates genes involved in megakaryocyte differentiation and platelet function"/>
</dbReference>
<dbReference type="Reactome" id="R-DME-9772755">
    <property type="pathway name" value="Formation of WDR5-containing histone-modifying complexes"/>
</dbReference>
<dbReference type="BioGRID-ORCS" id="31149">
    <property type="hits" value="0 hits in 3 CRISPR screens"/>
</dbReference>
<dbReference type="GenomeRNAi" id="31149"/>
<dbReference type="PRO" id="PR:Q8IRW8"/>
<dbReference type="Proteomes" id="UP000000803">
    <property type="component" value="Chromosome X"/>
</dbReference>
<dbReference type="Bgee" id="FBgn0023518">
    <property type="expression patterns" value="Expressed in outer photoreceptor cell (Drosophila) in insect head and 90 other cell types or tissues"/>
</dbReference>
<dbReference type="ExpressionAtlas" id="Q8IRW8">
    <property type="expression patterns" value="baseline and differential"/>
</dbReference>
<dbReference type="GO" id="GO:0044666">
    <property type="term" value="C:MLL3/4 complex"/>
    <property type="evidence" value="ECO:0000314"/>
    <property type="project" value="FlyBase"/>
</dbReference>
<dbReference type="GO" id="GO:0005634">
    <property type="term" value="C:nucleus"/>
    <property type="evidence" value="ECO:0000314"/>
    <property type="project" value="FlyBase"/>
</dbReference>
<dbReference type="GO" id="GO:0005700">
    <property type="term" value="C:polytene chromosome"/>
    <property type="evidence" value="ECO:0000314"/>
    <property type="project" value="FlyBase"/>
</dbReference>
<dbReference type="GO" id="GO:0005703">
    <property type="term" value="C:polytene chromosome puff"/>
    <property type="evidence" value="ECO:0000314"/>
    <property type="project" value="UniProtKB"/>
</dbReference>
<dbReference type="GO" id="GO:0001046">
    <property type="term" value="F:core promoter sequence-specific DNA binding"/>
    <property type="evidence" value="ECO:0000314"/>
    <property type="project" value="FlyBase"/>
</dbReference>
<dbReference type="GO" id="GO:0140946">
    <property type="term" value="F:histone H3K4 dimethyltransferase activity"/>
    <property type="evidence" value="ECO:0000315"/>
    <property type="project" value="FlyBase"/>
</dbReference>
<dbReference type="GO" id="GO:0042800">
    <property type="term" value="F:histone H3K4 methyltransferase activity"/>
    <property type="evidence" value="ECO:0000314"/>
    <property type="project" value="FlyBase"/>
</dbReference>
<dbReference type="GO" id="GO:0140945">
    <property type="term" value="F:histone H3K4 monomethyltransferase activity"/>
    <property type="evidence" value="ECO:0000315"/>
    <property type="project" value="FlyBase"/>
</dbReference>
<dbReference type="GO" id="GO:0140999">
    <property type="term" value="F:histone H3K4 trimethyltransferase activity"/>
    <property type="evidence" value="ECO:0007669"/>
    <property type="project" value="UniProtKB-EC"/>
</dbReference>
<dbReference type="GO" id="GO:0005102">
    <property type="term" value="F:signaling receptor binding"/>
    <property type="evidence" value="ECO:0000353"/>
    <property type="project" value="FlyBase"/>
</dbReference>
<dbReference type="GO" id="GO:0003713">
    <property type="term" value="F:transcription coactivator activity"/>
    <property type="evidence" value="ECO:0000316"/>
    <property type="project" value="FlyBase"/>
</dbReference>
<dbReference type="GO" id="GO:0008270">
    <property type="term" value="F:zinc ion binding"/>
    <property type="evidence" value="ECO:0007669"/>
    <property type="project" value="UniProtKB-KW"/>
</dbReference>
<dbReference type="GO" id="GO:0048749">
    <property type="term" value="P:compound eye development"/>
    <property type="evidence" value="ECO:0000315"/>
    <property type="project" value="FlyBase"/>
</dbReference>
<dbReference type="GO" id="GO:0032259">
    <property type="term" value="P:methylation"/>
    <property type="evidence" value="ECO:0007669"/>
    <property type="project" value="UniProtKB-KW"/>
</dbReference>
<dbReference type="GO" id="GO:0045893">
    <property type="term" value="P:positive regulation of DNA-templated transcription"/>
    <property type="evidence" value="ECO:0000316"/>
    <property type="project" value="FlyBase"/>
</dbReference>
<dbReference type="GO" id="GO:0120142">
    <property type="term" value="P:positive regulation of ecdysone receptor signaling pathway"/>
    <property type="evidence" value="ECO:0000316"/>
    <property type="project" value="FlyBase"/>
</dbReference>
<dbReference type="GO" id="GO:0045944">
    <property type="term" value="P:positive regulation of transcription by RNA polymerase II"/>
    <property type="evidence" value="ECO:0000314"/>
    <property type="project" value="FlyBase"/>
</dbReference>
<dbReference type="GO" id="GO:0007458">
    <property type="term" value="P:progression of morphogenetic furrow involved in compound eye morphogenesis"/>
    <property type="evidence" value="ECO:0000315"/>
    <property type="project" value="FlyBase"/>
</dbReference>
<dbReference type="GO" id="GO:0035075">
    <property type="term" value="P:response to ecdysone"/>
    <property type="evidence" value="ECO:0000314"/>
    <property type="project" value="UniProtKB"/>
</dbReference>
<dbReference type="CDD" id="cd15666">
    <property type="entry name" value="ePHD2_KMT2C_like"/>
    <property type="match status" value="1"/>
</dbReference>
<dbReference type="CDD" id="cd19171">
    <property type="entry name" value="SET_KMT2C_2D"/>
    <property type="match status" value="1"/>
</dbReference>
<dbReference type="FunFam" id="2.170.270.10:FF:000003">
    <property type="entry name" value="Histone-lysine N-methyltransferase"/>
    <property type="match status" value="1"/>
</dbReference>
<dbReference type="FunFam" id="3.30.160.360:FF:000001">
    <property type="entry name" value="Histone-lysine N-methyltransferase"/>
    <property type="match status" value="1"/>
</dbReference>
<dbReference type="FunFam" id="3.30.40.10:FF:000002">
    <property type="entry name" value="Histone-lysine N-methyltransferase"/>
    <property type="match status" value="1"/>
</dbReference>
<dbReference type="Gene3D" id="3.30.160.360">
    <property type="match status" value="1"/>
</dbReference>
<dbReference type="Gene3D" id="2.170.270.10">
    <property type="entry name" value="SET domain"/>
    <property type="match status" value="1"/>
</dbReference>
<dbReference type="Gene3D" id="3.30.40.10">
    <property type="entry name" value="Zinc/RING finger domain, C3HC4 (zinc finger)"/>
    <property type="match status" value="1"/>
</dbReference>
<dbReference type="InterPro" id="IPR034732">
    <property type="entry name" value="EPHD"/>
</dbReference>
<dbReference type="InterPro" id="IPR003889">
    <property type="entry name" value="FYrich_C"/>
</dbReference>
<dbReference type="InterPro" id="IPR003888">
    <property type="entry name" value="FYrich_N"/>
</dbReference>
<dbReference type="InterPro" id="IPR003616">
    <property type="entry name" value="Post-SET_dom"/>
</dbReference>
<dbReference type="InterPro" id="IPR001214">
    <property type="entry name" value="SET_dom"/>
</dbReference>
<dbReference type="InterPro" id="IPR046341">
    <property type="entry name" value="SET_dom_sf"/>
</dbReference>
<dbReference type="InterPro" id="IPR013083">
    <property type="entry name" value="Znf_RING/FYVE/PHD"/>
</dbReference>
<dbReference type="PANTHER" id="PTHR45888">
    <property type="entry name" value="HL01030P-RELATED"/>
    <property type="match status" value="1"/>
</dbReference>
<dbReference type="PANTHER" id="PTHR45888:SF6">
    <property type="entry name" value="HL01030P-RELATED"/>
    <property type="match status" value="1"/>
</dbReference>
<dbReference type="Pfam" id="PF05965">
    <property type="entry name" value="FYRC"/>
    <property type="match status" value="1"/>
</dbReference>
<dbReference type="Pfam" id="PF05964">
    <property type="entry name" value="FYRN"/>
    <property type="match status" value="1"/>
</dbReference>
<dbReference type="Pfam" id="PF00856">
    <property type="entry name" value="SET"/>
    <property type="match status" value="1"/>
</dbReference>
<dbReference type="Pfam" id="PF13832">
    <property type="entry name" value="zf-HC5HC2H_2"/>
    <property type="match status" value="1"/>
</dbReference>
<dbReference type="SMART" id="SM00542">
    <property type="entry name" value="FYRC"/>
    <property type="match status" value="1"/>
</dbReference>
<dbReference type="SMART" id="SM00541">
    <property type="entry name" value="FYRN"/>
    <property type="match status" value="1"/>
</dbReference>
<dbReference type="SMART" id="SM00508">
    <property type="entry name" value="PostSET"/>
    <property type="match status" value="1"/>
</dbReference>
<dbReference type="SMART" id="SM00317">
    <property type="entry name" value="SET"/>
    <property type="match status" value="1"/>
</dbReference>
<dbReference type="SUPFAM" id="SSF82199">
    <property type="entry name" value="SET domain"/>
    <property type="match status" value="1"/>
</dbReference>
<dbReference type="PROSITE" id="PS51805">
    <property type="entry name" value="EPHD"/>
    <property type="match status" value="1"/>
</dbReference>
<dbReference type="PROSITE" id="PS51543">
    <property type="entry name" value="FYRC"/>
    <property type="match status" value="1"/>
</dbReference>
<dbReference type="PROSITE" id="PS51542">
    <property type="entry name" value="FYRN"/>
    <property type="match status" value="1"/>
</dbReference>
<dbReference type="PROSITE" id="PS50868">
    <property type="entry name" value="POST_SET"/>
    <property type="match status" value="1"/>
</dbReference>
<dbReference type="PROSITE" id="PS50280">
    <property type="entry name" value="SET"/>
    <property type="match status" value="1"/>
</dbReference>
<gene>
    <name type="primary">trr</name>
    <name type="synonym">KMT2C</name>
    <name type="ORF">CG3848</name>
</gene>
<keyword id="KW-0010">Activator</keyword>
<keyword id="KW-0025">Alternative splicing</keyword>
<keyword id="KW-0156">Chromatin regulator</keyword>
<keyword id="KW-0158">Chromosome</keyword>
<keyword id="KW-0217">Developmental protein</keyword>
<keyword id="KW-0479">Metal-binding</keyword>
<keyword id="KW-0489">Methyltransferase</keyword>
<keyword id="KW-0539">Nucleus</keyword>
<keyword id="KW-0597">Phosphoprotein</keyword>
<keyword id="KW-1185">Reference proteome</keyword>
<keyword id="KW-0677">Repeat</keyword>
<keyword id="KW-0949">S-adenosyl-L-methionine</keyword>
<keyword id="KW-0804">Transcription</keyword>
<keyword id="KW-0805">Transcription regulation</keyword>
<keyword id="KW-0808">Transferase</keyword>
<keyword id="KW-0862">Zinc</keyword>
<keyword id="KW-0863">Zinc-finger</keyword>
<proteinExistence type="evidence at protein level"/>
<accession>Q8IRW8</accession>
<accession>O46083</accession>
<accession>Q8MYR5</accession>
<accession>Q8T9I7</accession>
<accession>Q9W548</accession>
<comment type="function">
    <text evidence="8 11 12">Histone methyltransferase that acts as a coactivator for the ecdysone receptor during development. Specifically trimethylates 'Lys-4' of histone H3, a specific tag for epigenetic transcriptional activation. Recruited by EcR in an ecdysone-dependent manner causing H3 'Lys-4' trimethylation at ecdysone-inducible promoters, leading to activate expression. Plays a central role in the developing compound eye, during the progression of the morphogenetic furrow and in post-furrow differentiation of the retinal epithelium, notably by activating expression of hh (PubMed:14603321, PubMed:23197473). Also required for wing and abdominal development (PubMed:14603321, PubMed:22726846, PubMed:23197473).</text>
</comment>
<comment type="catalytic activity">
    <reaction evidence="8">
        <text>L-lysyl(4)-[histone H3] + 3 S-adenosyl-L-methionine = N(6),N(6),N(6)-trimethyl-L-lysyl(4)-[histone H3] + 3 S-adenosyl-L-homocysteine + 3 H(+)</text>
        <dbReference type="Rhea" id="RHEA:60260"/>
        <dbReference type="Rhea" id="RHEA-COMP:15537"/>
        <dbReference type="Rhea" id="RHEA-COMP:15547"/>
        <dbReference type="ChEBI" id="CHEBI:15378"/>
        <dbReference type="ChEBI" id="CHEBI:29969"/>
        <dbReference type="ChEBI" id="CHEBI:57856"/>
        <dbReference type="ChEBI" id="CHEBI:59789"/>
        <dbReference type="ChEBI" id="CHEBI:61961"/>
        <dbReference type="EC" id="2.1.1.354"/>
    </reaction>
</comment>
<comment type="subunit">
    <text evidence="8 10 12">Component of the MLL3/4 complex composed at least of the catalytic subunit trr, ash2, Rbbp5, Dpy-30L1, wds, hcf, ptip, Pa1, Utx, Lpt and Ncoa6. Interacts with nuclear receptor EcR in an ecdysone-dependent manner. Interacts with ash2; the interaction stabilizes trr.</text>
</comment>
<comment type="subcellular location">
    <subcellularLocation>
        <location evidence="8">Nucleus</location>
    </subcellularLocation>
    <subcellularLocation>
        <location evidence="14">Chromosome</location>
    </subcellularLocation>
</comment>
<comment type="alternative products">
    <event type="alternative splicing"/>
    <isoform>
        <id>Q8IRW8-1</id>
        <name>1</name>
        <sequence type="displayed"/>
    </isoform>
    <isoform>
        <id>Q8IRW8-2</id>
        <name>2</name>
        <sequence type="described" ref="VSP_021439"/>
    </isoform>
</comment>
<comment type="tissue specificity">
    <text evidence="7">Widely expressed.</text>
</comment>
<comment type="developmental stage">
    <text evidence="7">Expressed both maternally and zygotically. Abundantly expressed in 1-7 than in 7-20 hours old embryos. Expressed uniformly at the preblastoderm stage, prior to the onset of zygotic transcription. In ovaries, it is not expressed in ovarian stem cells, oogonia or early cysts and is first detectable at stage 8 in nurse cells. At stage 10, it is expressed in the anterior end of the oocyte, and is uniformly distributed later on. Expressed almost uniformly in embryos from precellular blastoderm stage to the germband extended stage. At the germband extended stage, it is enriched in the mesoderm. During germband retraction, it is strongly expressed in the anterior and posterior midgut. At the germband retracted stage, it becomes less abundant and is mainly localized to the ventral nerve cord and the brain. In third instar larvae, it is strongly and almost ubiquitously expressed in all imaginal disks. Also weakly expressed expression in salivary glands. Not expressed in larval brain and gut tissues.</text>
</comment>
<comment type="domain">
    <text>Contains 3 Leu-Xaa-Xaa-Leu-Leu (LXXLL) motifs. LXXLL motif 2 is essential for the association with nuclear receptor EcR.</text>
</comment>
<comment type="disruption phenotype">
    <text evidence="11 12">Defects in mechanosensory bristle spacing and differentiation in wings and lack of chaetes and macrochaetes in abdominal a4 and a5 segments (PubMed:23197473). RNAi-mediated knockdown in the wing results in mild loss of wing veins and a slight upward curvature of the wing (PubMed:22726846).</text>
</comment>
<comment type="miscellaneous">
    <molecule>Isoform 2</molecule>
    <text evidence="13">Produced by alternative promoter usage.</text>
</comment>
<comment type="similarity">
    <text evidence="2">Belongs to the class V-like SAM-binding methyltransferase superfamily. Histone-lysine methyltransferase family. TRX/MLL subfamily.</text>
</comment>
<comment type="sequence caution" evidence="13">
    <conflict type="erroneous initiation">
        <sequence resource="EMBL-CDS" id="AAL39418"/>
    </conflict>
    <text>Truncated N-terminus.</text>
</comment>
<comment type="sequence caution" evidence="13">
    <conflict type="erroneous initiation">
        <sequence resource="EMBL-CDS" id="AAM29656"/>
    </conflict>
    <text>Truncated N-terminus.</text>
</comment>
<comment type="sequence caution" evidence="13">
    <conflict type="erroneous gene model prediction">
        <sequence resource="EMBL-CDS" id="CAA15944"/>
    </conflict>
</comment>
<protein>
    <recommendedName>
        <fullName>Histone-lysine N-methyltransferase trr</fullName>
        <ecNumber evidence="8">2.1.1.354</ecNumber>
    </recommendedName>
    <alternativeName>
        <fullName>Lysine N-methyltransferase 2C</fullName>
    </alternativeName>
    <alternativeName>
        <fullName>Trithorax-related protein</fullName>
    </alternativeName>
</protein>
<name>TRR_DROME</name>
<sequence length="2431" mass="259828">MNIPKVTTSLGAAEKAKPERVASVAAAAFNAVSLQKRSGDDTATPAEDPTRKKAKTELLLGTGTAAPSLPAKASSTAPQQLLYQRSGQQAKAQVKAASEPQDVETADGVWDARDQQIIVCNFGSGTEMGAIKAEDADKQSEYRISTPRNSQSNPLLHRNTAFTSFTKKEGASSSASSSSSTASVISIEPSGSGQDHAENSGKSEDLDYVLMPASGADSSTSVGNSTGTGTPAGTPIGATTSTIILNANNGTAGVSGAGTTTILTQKSGHTNYNIFNTTATGSQTPTTTLLNRVNLHPKMKTQLMVNAKKLSEVTQTTAKVSIGNKTISVPLLKPLMSASGAATAGGATIVESKQLLQPGGQVTTVMSAAQQSGGQQVHPHVHSHAHHNFTKLIKRGPKNSGTIVSFSGLQIKPANTKIVATKVVSKKMLQLQQHQQQIQQQQQLQQLQVTSGGGLAPPTGSIVTITTTNPSQTYAMVQDSATVGPAAHSEDDAPAPRKITAYSENLQKILNKSKSQESTGGPEEFTNINSVVIKPLDKNTLNCPPSFNIFKQQQHSQAAQSQSISAVGSGAGTPVTFTMASGNASDLATTSTVSVSAGTICINSPMMGTRPIISIQNKNISLVLSKTTMAQQKPKMITTTTLSSQAALQMHHALIQDSSADKAGSSANSGSATSGASMQLKLTTANTPTKLSVSLAPDVVKLEEVGSESKAKLLVKQEAVVKDSTGTPTSEERAEEIGTPEKRLNANATMTAINQVQNQSANQIQMATSTSTASNPSTPNPTVNATPMNNQRSAAEDNALLKQLLQNNSSSHSLNQISITSAHVGSASASAPLSARKVINVRAPSMGKVRSLEDQLARPVIPPVPTATQAAGSSSSSGSVATSTTTTTVASGGSSQQVATASATALPVSAVAITTPGVGGEAKLEQKSDQPAAIMQNQSQNQAPPPPPPPQQQQQQQLHQPQQLQPSPHQVKQTVQIVSKETSFISGPVAAKTLVTEATSKPAELLPPPPYEMATAPISNVTISISTKQAAPKELQMKPKAVAMSLPMEQGDESLPEQAEPPLHSEQGATAAGVAPHSGGPLVSAQWTNNHLEGGVATTKIPFKPGEPQKRKLPMHPQLDEKQIQQQAEIPISTSLPTTPTGQGTPDKVQLISAIATYVKKSGVPNEAQPIQNQSQGQVQMQAQMQATMQGHLSGQMSGQISGHAAGQIPAQMHLQVQHQLHMAVHPQQQQQQLHQNQPQNATIPLPVTGQGAVPIPVPTMESKAGDQRKRRKREVQKPRRTNLNAGQAGGALKDLTGPLPAGAMVQLAGMPPGTQYIQGAASGTGHVITSTGQGVTLGGVGASTGASSSPMLKKRVRKFSKVEEDHDAFTEKLLTHIRQMQPLQVLEPHLNRNFHFLIGSNETSGGGSPASMSSAASAGSSSAGGGKLKGGSRGWPLSRHLEGLEDCDGTVLGRYGRVNLPGIPSLYDSERFGGSRGLVGGSARTRSPSPAESPGAEKMLPMSSIQNDFYDQEFSTHMERNPRERLVRHIGAVKDCNLETVDLVESEGVAAWATLPRLTRYPGLILLNGNSRCHGRMSPVALPEDPLTMRFPVSPLLRSCGEELRKTQQMELGMGPLGNNNNNNYQQKNQNVILALPASASENIAGVLRDLANLLHLAPALTCKIIEDKIGNKLEDQFMNQDDEKHVDFKRPLSQVSHGHLRKILNGRRKLCRSCGNVVHATGLRVPRHSVPALEEQLPRLAQLMDMLPRKSVPPPFVYFCDRACFARFKWNGKDGQAEAASLLLQPAGGSAVKSSNGDSPGSFCASSTAPAEMVVKQEPEDEDEKTPSVPGNPTNIPAQRKCIVKCFSADCFTTDSAPSGLELDGTAGAGTGAGPVNNTVWETETSGLQLEDTRQCVFCNQRGDGQADGPSRLLNFDVDKWVHLNCALWSNGVYETVSGALMNFQTALQAGLSQACSACHQPGATIKCFKSRCNSLYHLPCAIREECVFYKNKSVHCSVHGHAHAGITMGAGAGATTGAGLGGSVADNELSSLVVHRRVFVDRDENRQVATVMHYSELSNLLRVGNMTFLNVGQLLPHQLEAFHTPHYIYPIGYKVSRYYWCVRRPNRRCRYICSIAEAGCKPEFRIQVQDAGDKEPEREFRGSSPSAVWQQILQPITRLRKVHKWLQLFPQHISGEDLFGLTEPAIVRILESLPGIETLTDYRFKYGRNPLLEFPLAINPSGAARTEPKQRQLLVWRKPHTQRTAGSCSTQRMANSAAIAGEVACPYSKQFVHSKSSQYKKMKQEWRNNVYLARSKIQGLGLYAARDIEKHTMIIEYIGEVIRTEVSEIREKQYESKNRGIYMFRLDEDRVVDATLSGGLARYINHSCNPNCVTEIVEVDRDVRIIIFAKRKIYRGEELSYDYKFDIEDESHKIPCACGAPNCRKWMN</sequence>
<evidence type="ECO:0000255" key="1">
    <source>
        <dbReference type="PROSITE-ProRule" id="PRU00155"/>
    </source>
</evidence>
<evidence type="ECO:0000255" key="2">
    <source>
        <dbReference type="PROSITE-ProRule" id="PRU00190"/>
    </source>
</evidence>
<evidence type="ECO:0000255" key="3">
    <source>
        <dbReference type="PROSITE-ProRule" id="PRU00875"/>
    </source>
</evidence>
<evidence type="ECO:0000255" key="4">
    <source>
        <dbReference type="PROSITE-ProRule" id="PRU00876"/>
    </source>
</evidence>
<evidence type="ECO:0000255" key="5">
    <source>
        <dbReference type="PROSITE-ProRule" id="PRU01146"/>
    </source>
</evidence>
<evidence type="ECO:0000256" key="6">
    <source>
        <dbReference type="SAM" id="MobiDB-lite"/>
    </source>
</evidence>
<evidence type="ECO:0000269" key="7">
    <source>
    </source>
</evidence>
<evidence type="ECO:0000269" key="8">
    <source>
    </source>
</evidence>
<evidence type="ECO:0000269" key="9">
    <source>
    </source>
</evidence>
<evidence type="ECO:0000269" key="10">
    <source>
    </source>
</evidence>
<evidence type="ECO:0000269" key="11">
    <source>
    </source>
</evidence>
<evidence type="ECO:0000269" key="12">
    <source>
    </source>
</evidence>
<evidence type="ECO:0000305" key="13"/>
<evidence type="ECO:0000305" key="14">
    <source>
    </source>
</evidence>